<name>CCA_ACIB5</name>
<gene>
    <name evidence="1" type="primary">cca</name>
    <name type="ordered locus">AB57_2774</name>
</gene>
<evidence type="ECO:0000255" key="1">
    <source>
        <dbReference type="HAMAP-Rule" id="MF_01261"/>
    </source>
</evidence>
<dbReference type="EC" id="2.7.7.72" evidence="1"/>
<dbReference type="EC" id="3.1.3.-" evidence="1"/>
<dbReference type="EC" id="3.1.4.-" evidence="1"/>
<dbReference type="EMBL" id="CP001182">
    <property type="protein sequence ID" value="ACJ42124.1"/>
    <property type="molecule type" value="Genomic_DNA"/>
</dbReference>
<dbReference type="RefSeq" id="WP_001198539.1">
    <property type="nucleotide sequence ID" value="NC_011586.2"/>
</dbReference>
<dbReference type="SMR" id="B7I3L8"/>
<dbReference type="KEGG" id="abn:AB57_2774"/>
<dbReference type="HOGENOM" id="CLU_015961_1_1_6"/>
<dbReference type="Proteomes" id="UP000007094">
    <property type="component" value="Chromosome"/>
</dbReference>
<dbReference type="GO" id="GO:0005524">
    <property type="term" value="F:ATP binding"/>
    <property type="evidence" value="ECO:0007669"/>
    <property type="project" value="UniProtKB-UniRule"/>
</dbReference>
<dbReference type="GO" id="GO:0004810">
    <property type="term" value="F:CCA tRNA nucleotidyltransferase activity"/>
    <property type="evidence" value="ECO:0007669"/>
    <property type="project" value="UniProtKB-UniRule"/>
</dbReference>
<dbReference type="GO" id="GO:0004112">
    <property type="term" value="F:cyclic-nucleotide phosphodiesterase activity"/>
    <property type="evidence" value="ECO:0007669"/>
    <property type="project" value="UniProtKB-UniRule"/>
</dbReference>
<dbReference type="GO" id="GO:0000287">
    <property type="term" value="F:magnesium ion binding"/>
    <property type="evidence" value="ECO:0007669"/>
    <property type="project" value="UniProtKB-UniRule"/>
</dbReference>
<dbReference type="GO" id="GO:0016791">
    <property type="term" value="F:phosphatase activity"/>
    <property type="evidence" value="ECO:0007669"/>
    <property type="project" value="UniProtKB-UniRule"/>
</dbReference>
<dbReference type="GO" id="GO:0000049">
    <property type="term" value="F:tRNA binding"/>
    <property type="evidence" value="ECO:0007669"/>
    <property type="project" value="UniProtKB-UniRule"/>
</dbReference>
<dbReference type="GO" id="GO:0042245">
    <property type="term" value="P:RNA repair"/>
    <property type="evidence" value="ECO:0007669"/>
    <property type="project" value="UniProtKB-KW"/>
</dbReference>
<dbReference type="GO" id="GO:0001680">
    <property type="term" value="P:tRNA 3'-terminal CCA addition"/>
    <property type="evidence" value="ECO:0007669"/>
    <property type="project" value="UniProtKB-UniRule"/>
</dbReference>
<dbReference type="CDD" id="cd00077">
    <property type="entry name" value="HDc"/>
    <property type="match status" value="1"/>
</dbReference>
<dbReference type="CDD" id="cd05398">
    <property type="entry name" value="NT_ClassII-CCAase"/>
    <property type="match status" value="1"/>
</dbReference>
<dbReference type="Gene3D" id="3.30.460.10">
    <property type="entry name" value="Beta Polymerase, domain 2"/>
    <property type="match status" value="1"/>
</dbReference>
<dbReference type="Gene3D" id="1.10.3090.10">
    <property type="entry name" value="cca-adding enzyme, domain 2"/>
    <property type="match status" value="1"/>
</dbReference>
<dbReference type="HAMAP" id="MF_01261">
    <property type="entry name" value="CCA_bact_type1"/>
    <property type="match status" value="1"/>
</dbReference>
<dbReference type="HAMAP" id="MF_01262">
    <property type="entry name" value="CCA_bact_type2"/>
    <property type="match status" value="1"/>
</dbReference>
<dbReference type="InterPro" id="IPR012006">
    <property type="entry name" value="CCA_bact"/>
</dbReference>
<dbReference type="InterPro" id="IPR003607">
    <property type="entry name" value="HD/PDEase_dom"/>
</dbReference>
<dbReference type="InterPro" id="IPR006674">
    <property type="entry name" value="HD_domain"/>
</dbReference>
<dbReference type="InterPro" id="IPR043519">
    <property type="entry name" value="NT_sf"/>
</dbReference>
<dbReference type="InterPro" id="IPR002646">
    <property type="entry name" value="PolA_pol_head_dom"/>
</dbReference>
<dbReference type="InterPro" id="IPR032828">
    <property type="entry name" value="PolyA_RNA-bd"/>
</dbReference>
<dbReference type="InterPro" id="IPR050124">
    <property type="entry name" value="tRNA_CCA-adding_enzyme"/>
</dbReference>
<dbReference type="NCBIfam" id="NF008137">
    <property type="entry name" value="PRK10885.1"/>
    <property type="match status" value="1"/>
</dbReference>
<dbReference type="PANTHER" id="PTHR47545">
    <property type="entry name" value="MULTIFUNCTIONAL CCA PROTEIN"/>
    <property type="match status" value="1"/>
</dbReference>
<dbReference type="PANTHER" id="PTHR47545:SF1">
    <property type="entry name" value="MULTIFUNCTIONAL CCA PROTEIN"/>
    <property type="match status" value="1"/>
</dbReference>
<dbReference type="Pfam" id="PF01966">
    <property type="entry name" value="HD"/>
    <property type="match status" value="1"/>
</dbReference>
<dbReference type="Pfam" id="PF01743">
    <property type="entry name" value="PolyA_pol"/>
    <property type="match status" value="1"/>
</dbReference>
<dbReference type="Pfam" id="PF12627">
    <property type="entry name" value="PolyA_pol_RNAbd"/>
    <property type="match status" value="1"/>
</dbReference>
<dbReference type="PIRSF" id="PIRSF000813">
    <property type="entry name" value="CCA_bact"/>
    <property type="match status" value="1"/>
</dbReference>
<dbReference type="SUPFAM" id="SSF81301">
    <property type="entry name" value="Nucleotidyltransferase"/>
    <property type="match status" value="1"/>
</dbReference>
<dbReference type="SUPFAM" id="SSF81891">
    <property type="entry name" value="Poly A polymerase C-terminal region-like"/>
    <property type="match status" value="1"/>
</dbReference>
<dbReference type="PROSITE" id="PS51831">
    <property type="entry name" value="HD"/>
    <property type="match status" value="1"/>
</dbReference>
<comment type="function">
    <text evidence="1">Catalyzes the addition and repair of the essential 3'-terminal CCA sequence in tRNAs without using a nucleic acid template. Adds these three nucleotides in the order of C, C, and A to the tRNA nucleotide-73, using CTP and ATP as substrates and producing inorganic pyrophosphate. tRNA 3'-terminal CCA addition is required both for tRNA processing and repair. Also involved in tRNA surveillance by mediating tandem CCA addition to generate a CCACCA at the 3' terminus of unstable tRNAs. While stable tRNAs receive only 3'-terminal CCA, unstable tRNAs are marked with CCACCA and rapidly degraded.</text>
</comment>
<comment type="catalytic activity">
    <reaction evidence="1">
        <text>a tRNA precursor + 2 CTP + ATP = a tRNA with a 3' CCA end + 3 diphosphate</text>
        <dbReference type="Rhea" id="RHEA:14433"/>
        <dbReference type="Rhea" id="RHEA-COMP:10465"/>
        <dbReference type="Rhea" id="RHEA-COMP:10468"/>
        <dbReference type="ChEBI" id="CHEBI:30616"/>
        <dbReference type="ChEBI" id="CHEBI:33019"/>
        <dbReference type="ChEBI" id="CHEBI:37563"/>
        <dbReference type="ChEBI" id="CHEBI:74896"/>
        <dbReference type="ChEBI" id="CHEBI:83071"/>
        <dbReference type="EC" id="2.7.7.72"/>
    </reaction>
</comment>
<comment type="catalytic activity">
    <reaction evidence="1">
        <text>a tRNA with a 3' CCA end + 2 CTP + ATP = a tRNA with a 3' CCACCA end + 3 diphosphate</text>
        <dbReference type="Rhea" id="RHEA:76235"/>
        <dbReference type="Rhea" id="RHEA-COMP:10468"/>
        <dbReference type="Rhea" id="RHEA-COMP:18655"/>
        <dbReference type="ChEBI" id="CHEBI:30616"/>
        <dbReference type="ChEBI" id="CHEBI:33019"/>
        <dbReference type="ChEBI" id="CHEBI:37563"/>
        <dbReference type="ChEBI" id="CHEBI:83071"/>
        <dbReference type="ChEBI" id="CHEBI:195187"/>
    </reaction>
    <physiologicalReaction direction="left-to-right" evidence="1">
        <dbReference type="Rhea" id="RHEA:76236"/>
    </physiologicalReaction>
</comment>
<comment type="cofactor">
    <cofactor evidence="1">
        <name>Mg(2+)</name>
        <dbReference type="ChEBI" id="CHEBI:18420"/>
    </cofactor>
    <text evidence="1">Magnesium is required for nucleotidyltransferase activity.</text>
</comment>
<comment type="cofactor">
    <cofactor evidence="1">
        <name>Ni(2+)</name>
        <dbReference type="ChEBI" id="CHEBI:49786"/>
    </cofactor>
    <text evidence="1">Nickel for phosphatase activity.</text>
</comment>
<comment type="subunit">
    <text evidence="1">Monomer. Can also form homodimers and oligomers.</text>
</comment>
<comment type="domain">
    <text evidence="1">Comprises two domains: an N-terminal domain containing the nucleotidyltransferase activity and a C-terminal HD domain associated with both phosphodiesterase and phosphatase activities.</text>
</comment>
<comment type="miscellaneous">
    <text evidence="1">A single active site specifically recognizes both ATP and CTP and is responsible for their addition.</text>
</comment>
<comment type="similarity">
    <text evidence="1">Belongs to the tRNA nucleotidyltransferase/poly(A) polymerase family. Bacterial CCA-adding enzyme type 1 subfamily.</text>
</comment>
<feature type="chain" id="PRO_1000140016" description="Multifunctional CCA protein">
    <location>
        <begin position="1"/>
        <end position="412"/>
    </location>
</feature>
<feature type="domain" description="HD" evidence="1">
    <location>
        <begin position="228"/>
        <end position="329"/>
    </location>
</feature>
<feature type="binding site" evidence="1">
    <location>
        <position position="8"/>
    </location>
    <ligand>
        <name>ATP</name>
        <dbReference type="ChEBI" id="CHEBI:30616"/>
    </ligand>
</feature>
<feature type="binding site" evidence="1">
    <location>
        <position position="8"/>
    </location>
    <ligand>
        <name>CTP</name>
        <dbReference type="ChEBI" id="CHEBI:37563"/>
    </ligand>
</feature>
<feature type="binding site" evidence="1">
    <location>
        <position position="11"/>
    </location>
    <ligand>
        <name>ATP</name>
        <dbReference type="ChEBI" id="CHEBI:30616"/>
    </ligand>
</feature>
<feature type="binding site" evidence="1">
    <location>
        <position position="11"/>
    </location>
    <ligand>
        <name>CTP</name>
        <dbReference type="ChEBI" id="CHEBI:37563"/>
    </ligand>
</feature>
<feature type="binding site" evidence="1">
    <location>
        <position position="21"/>
    </location>
    <ligand>
        <name>Mg(2+)</name>
        <dbReference type="ChEBI" id="CHEBI:18420"/>
    </ligand>
</feature>
<feature type="binding site" evidence="1">
    <location>
        <position position="23"/>
    </location>
    <ligand>
        <name>Mg(2+)</name>
        <dbReference type="ChEBI" id="CHEBI:18420"/>
    </ligand>
</feature>
<feature type="binding site" evidence="1">
    <location>
        <position position="91"/>
    </location>
    <ligand>
        <name>ATP</name>
        <dbReference type="ChEBI" id="CHEBI:30616"/>
    </ligand>
</feature>
<feature type="binding site" evidence="1">
    <location>
        <position position="91"/>
    </location>
    <ligand>
        <name>CTP</name>
        <dbReference type="ChEBI" id="CHEBI:37563"/>
    </ligand>
</feature>
<feature type="binding site" evidence="1">
    <location>
        <position position="137"/>
    </location>
    <ligand>
        <name>ATP</name>
        <dbReference type="ChEBI" id="CHEBI:30616"/>
    </ligand>
</feature>
<feature type="binding site" evidence="1">
    <location>
        <position position="137"/>
    </location>
    <ligand>
        <name>CTP</name>
        <dbReference type="ChEBI" id="CHEBI:37563"/>
    </ligand>
</feature>
<feature type="binding site" evidence="1">
    <location>
        <position position="140"/>
    </location>
    <ligand>
        <name>ATP</name>
        <dbReference type="ChEBI" id="CHEBI:30616"/>
    </ligand>
</feature>
<feature type="binding site" evidence="1">
    <location>
        <position position="140"/>
    </location>
    <ligand>
        <name>CTP</name>
        <dbReference type="ChEBI" id="CHEBI:37563"/>
    </ligand>
</feature>
<accession>B7I3L8</accession>
<organism>
    <name type="scientific">Acinetobacter baumannii (strain AB0057)</name>
    <dbReference type="NCBI Taxonomy" id="480119"/>
    <lineage>
        <taxon>Bacteria</taxon>
        <taxon>Pseudomonadati</taxon>
        <taxon>Pseudomonadota</taxon>
        <taxon>Gammaproteobacteria</taxon>
        <taxon>Moraxellales</taxon>
        <taxon>Moraxellaceae</taxon>
        <taxon>Acinetobacter</taxon>
        <taxon>Acinetobacter calcoaceticus/baumannii complex</taxon>
    </lineage>
</organism>
<keyword id="KW-0067">ATP-binding</keyword>
<keyword id="KW-0378">Hydrolase</keyword>
<keyword id="KW-0460">Magnesium</keyword>
<keyword id="KW-0479">Metal-binding</keyword>
<keyword id="KW-0511">Multifunctional enzyme</keyword>
<keyword id="KW-0533">Nickel</keyword>
<keyword id="KW-0547">Nucleotide-binding</keyword>
<keyword id="KW-0548">Nucleotidyltransferase</keyword>
<keyword id="KW-0692">RNA repair</keyword>
<keyword id="KW-0694">RNA-binding</keyword>
<keyword id="KW-0808">Transferase</keyword>
<keyword id="KW-0819">tRNA processing</keyword>
<sequence length="412" mass="47189">MQVYLVGGAVRDYLLGHPYQEKDYVVVGATPEHMLAQGFQPVGKDFPVFLHPETKEEYALARTERKSGQGYHGFQFFTDTTVSLEDDLIRRDLTINAIAMDQDGKIYDPYGGQNDLENKILRHVSEAFAEDPLRVLRVARFAARYFPYGFQIAPETLQLMQTMADSGELDALTPERVWKETSRALMENHADIYFQTLRDCGALKHLFPEIDALFGVPQRPEYHPEVDCGIHTLMSLQQACKSNYSLDVRFAVLVHDLGKALTPAEELPRHIMHEERGIKPVTQLCERLRVPTQTKQLALSVCKEHLKCHQIMSLKPGTLWRLLQRLDVLRRPERVEAFVQACECDAKGRLGLEDRPYPQAQYMREAMQIVRSIKVQDLPENIKGAEIGEMLIQYRIEALAEFKNQHQSLSHS</sequence>
<reference key="1">
    <citation type="journal article" date="2008" name="J. Bacteriol.">
        <title>Comparative genome sequence analysis of multidrug-resistant Acinetobacter baumannii.</title>
        <authorList>
            <person name="Adams M.D."/>
            <person name="Goglin K."/>
            <person name="Molyneaux N."/>
            <person name="Hujer K.M."/>
            <person name="Lavender H."/>
            <person name="Jamison J.J."/>
            <person name="MacDonald I.J."/>
            <person name="Martin K.M."/>
            <person name="Russo T."/>
            <person name="Campagnari A.A."/>
            <person name="Hujer A.M."/>
            <person name="Bonomo R.A."/>
            <person name="Gill S.R."/>
        </authorList>
    </citation>
    <scope>NUCLEOTIDE SEQUENCE [LARGE SCALE GENOMIC DNA]</scope>
    <source>
        <strain>AB0057</strain>
    </source>
</reference>
<proteinExistence type="inferred from homology"/>
<protein>
    <recommendedName>
        <fullName evidence="1">Multifunctional CCA protein</fullName>
    </recommendedName>
    <domain>
        <recommendedName>
            <fullName evidence="1">CCA-adding enzyme</fullName>
            <ecNumber evidence="1">2.7.7.72</ecNumber>
        </recommendedName>
        <alternativeName>
            <fullName evidence="1">CCA tRNA nucleotidyltransferase</fullName>
        </alternativeName>
        <alternativeName>
            <fullName evidence="1">tRNA CCA-pyrophosphorylase</fullName>
        </alternativeName>
        <alternativeName>
            <fullName evidence="1">tRNA adenylyl-/cytidylyl-transferase</fullName>
        </alternativeName>
        <alternativeName>
            <fullName evidence="1">tRNA nucleotidyltransferase</fullName>
        </alternativeName>
        <alternativeName>
            <fullName evidence="1">tRNA-NT</fullName>
        </alternativeName>
    </domain>
    <domain>
        <recommendedName>
            <fullName evidence="1">2'-nucleotidase</fullName>
            <ecNumber evidence="1">3.1.3.-</ecNumber>
        </recommendedName>
    </domain>
    <domain>
        <recommendedName>
            <fullName evidence="1">2',3'-cyclic phosphodiesterase</fullName>
            <ecNumber evidence="1">3.1.4.-</ecNumber>
        </recommendedName>
    </domain>
    <domain>
        <recommendedName>
            <fullName evidence="1">Phosphatase</fullName>
            <ecNumber evidence="1">3.1.3.-</ecNumber>
        </recommendedName>
    </domain>
</protein>